<dbReference type="EC" id="4.2.1.20" evidence="1"/>
<dbReference type="EMBL" id="CP000872">
    <property type="protein sequence ID" value="ABX63137.1"/>
    <property type="molecule type" value="Genomic_DNA"/>
</dbReference>
<dbReference type="SMR" id="A9M9U2"/>
<dbReference type="KEGG" id="bcs:BCAN_A2154"/>
<dbReference type="HOGENOM" id="CLU_016734_3_1_5"/>
<dbReference type="UniPathway" id="UPA00035">
    <property type="reaction ID" value="UER00044"/>
</dbReference>
<dbReference type="PRO" id="PR:A9M9U2"/>
<dbReference type="Proteomes" id="UP000001385">
    <property type="component" value="Chromosome I"/>
</dbReference>
<dbReference type="GO" id="GO:0005737">
    <property type="term" value="C:cytoplasm"/>
    <property type="evidence" value="ECO:0007669"/>
    <property type="project" value="TreeGrafter"/>
</dbReference>
<dbReference type="GO" id="GO:0004834">
    <property type="term" value="F:tryptophan synthase activity"/>
    <property type="evidence" value="ECO:0007669"/>
    <property type="project" value="UniProtKB-UniRule"/>
</dbReference>
<dbReference type="CDD" id="cd06446">
    <property type="entry name" value="Trp-synth_B"/>
    <property type="match status" value="1"/>
</dbReference>
<dbReference type="FunFam" id="3.40.50.1100:FF:000001">
    <property type="entry name" value="Tryptophan synthase beta chain"/>
    <property type="match status" value="1"/>
</dbReference>
<dbReference type="FunFam" id="3.40.50.1100:FF:000004">
    <property type="entry name" value="Tryptophan synthase beta chain"/>
    <property type="match status" value="1"/>
</dbReference>
<dbReference type="Gene3D" id="3.40.50.1100">
    <property type="match status" value="2"/>
</dbReference>
<dbReference type="HAMAP" id="MF_00133">
    <property type="entry name" value="Trp_synth_beta"/>
    <property type="match status" value="1"/>
</dbReference>
<dbReference type="InterPro" id="IPR006653">
    <property type="entry name" value="Trp_synth_b_CS"/>
</dbReference>
<dbReference type="InterPro" id="IPR006654">
    <property type="entry name" value="Trp_synth_beta"/>
</dbReference>
<dbReference type="InterPro" id="IPR023026">
    <property type="entry name" value="Trp_synth_beta/beta-like"/>
</dbReference>
<dbReference type="InterPro" id="IPR001926">
    <property type="entry name" value="TrpB-like_PALP"/>
</dbReference>
<dbReference type="InterPro" id="IPR036052">
    <property type="entry name" value="TrpB-like_PALP_sf"/>
</dbReference>
<dbReference type="NCBIfam" id="TIGR00263">
    <property type="entry name" value="trpB"/>
    <property type="match status" value="1"/>
</dbReference>
<dbReference type="PANTHER" id="PTHR48077:SF3">
    <property type="entry name" value="TRYPTOPHAN SYNTHASE"/>
    <property type="match status" value="1"/>
</dbReference>
<dbReference type="PANTHER" id="PTHR48077">
    <property type="entry name" value="TRYPTOPHAN SYNTHASE-RELATED"/>
    <property type="match status" value="1"/>
</dbReference>
<dbReference type="Pfam" id="PF00291">
    <property type="entry name" value="PALP"/>
    <property type="match status" value="1"/>
</dbReference>
<dbReference type="PIRSF" id="PIRSF001413">
    <property type="entry name" value="Trp_syn_beta"/>
    <property type="match status" value="1"/>
</dbReference>
<dbReference type="SUPFAM" id="SSF53686">
    <property type="entry name" value="Tryptophan synthase beta subunit-like PLP-dependent enzymes"/>
    <property type="match status" value="1"/>
</dbReference>
<dbReference type="PROSITE" id="PS00168">
    <property type="entry name" value="TRP_SYNTHASE_BETA"/>
    <property type="match status" value="1"/>
</dbReference>
<name>TRPB_BRUC2</name>
<sequence length="406" mass="43571">MNKPVAPNSYKTGPDEEGMFGIFGGRFVAETLMPLILELQQAYETAKNDPEFKAELNALSTFYAGRPSKLYYAEGLSKHLGGAKIYFKREDLNHTGSHKINNCLGQILLAKRMGKTRIIAETGAGQHGVASATVAARFGLPCIVYMGATDVERQKPNVFRMKLLGAEVKPVSAGNGTLKDAMNEALRDWVTNVEDTYYLIGTAAGPHPYPELVRDFQSVIGTEARQQILEQEGRLPDVIVAAVGGGSNAIGLFHPFLDDASVKIVGVEAGGRGLEGEEHCASMSAGRPGVLHGNRTYLLQNADGQILEGHSVSAGLDYPGVGPEHSWLKDSGRVDYVPILDNEALDAFQLCTRTEGIIPALESAHAIAQAVKMAPTMGKDKVMIVNLSGRGDKDVHTVGKLLGMDI</sequence>
<reference key="1">
    <citation type="submission" date="2007-10" db="EMBL/GenBank/DDBJ databases">
        <title>Brucella canis ATCC 23365 whole genome shotgun sequencing project.</title>
        <authorList>
            <person name="Setubal J.C."/>
            <person name="Bowns C."/>
            <person name="Boyle S."/>
            <person name="Crasta O.R."/>
            <person name="Czar M.J."/>
            <person name="Dharmanolla C."/>
            <person name="Gillespie J.J."/>
            <person name="Kenyon R.W."/>
            <person name="Lu J."/>
            <person name="Mane S."/>
            <person name="Mohapatra S."/>
            <person name="Nagrani S."/>
            <person name="Purkayastha A."/>
            <person name="Rajasimha H.K."/>
            <person name="Shallom J.M."/>
            <person name="Shallom S."/>
            <person name="Shukla M."/>
            <person name="Snyder E.E."/>
            <person name="Sobral B.W."/>
            <person name="Wattam A.R."/>
            <person name="Will R."/>
            <person name="Williams K."/>
            <person name="Yoo H."/>
            <person name="Bruce D."/>
            <person name="Detter C."/>
            <person name="Munk C."/>
            <person name="Brettin T.S."/>
        </authorList>
    </citation>
    <scope>NUCLEOTIDE SEQUENCE [LARGE SCALE GENOMIC DNA]</scope>
    <source>
        <strain>ATCC 23365 / NCTC 10854 / RM-666</strain>
    </source>
</reference>
<proteinExistence type="inferred from homology"/>
<comment type="function">
    <text evidence="1">The beta subunit is responsible for the synthesis of L-tryptophan from indole and L-serine.</text>
</comment>
<comment type="catalytic activity">
    <reaction evidence="1">
        <text>(1S,2R)-1-C-(indol-3-yl)glycerol 3-phosphate + L-serine = D-glyceraldehyde 3-phosphate + L-tryptophan + H2O</text>
        <dbReference type="Rhea" id="RHEA:10532"/>
        <dbReference type="ChEBI" id="CHEBI:15377"/>
        <dbReference type="ChEBI" id="CHEBI:33384"/>
        <dbReference type="ChEBI" id="CHEBI:57912"/>
        <dbReference type="ChEBI" id="CHEBI:58866"/>
        <dbReference type="ChEBI" id="CHEBI:59776"/>
        <dbReference type="EC" id="4.2.1.20"/>
    </reaction>
</comment>
<comment type="cofactor">
    <cofactor evidence="1">
        <name>pyridoxal 5'-phosphate</name>
        <dbReference type="ChEBI" id="CHEBI:597326"/>
    </cofactor>
</comment>
<comment type="pathway">
    <text evidence="1">Amino-acid biosynthesis; L-tryptophan biosynthesis; L-tryptophan from chorismate: step 5/5.</text>
</comment>
<comment type="subunit">
    <text evidence="1">Tetramer of two alpha and two beta chains.</text>
</comment>
<comment type="similarity">
    <text evidence="1">Belongs to the TrpB family.</text>
</comment>
<feature type="chain" id="PRO_1000076381" description="Tryptophan synthase beta chain">
    <location>
        <begin position="1"/>
        <end position="406"/>
    </location>
</feature>
<feature type="modified residue" description="N6-(pyridoxal phosphate)lysine" evidence="1">
    <location>
        <position position="99"/>
    </location>
</feature>
<keyword id="KW-0028">Amino-acid biosynthesis</keyword>
<keyword id="KW-0057">Aromatic amino acid biosynthesis</keyword>
<keyword id="KW-0456">Lyase</keyword>
<keyword id="KW-0663">Pyridoxal phosphate</keyword>
<keyword id="KW-1185">Reference proteome</keyword>
<keyword id="KW-0822">Tryptophan biosynthesis</keyword>
<protein>
    <recommendedName>
        <fullName evidence="1">Tryptophan synthase beta chain</fullName>
        <ecNumber evidence="1">4.2.1.20</ecNumber>
    </recommendedName>
</protein>
<gene>
    <name evidence="1" type="primary">trpB</name>
    <name type="ordered locus">BCAN_A2154</name>
</gene>
<organism>
    <name type="scientific">Brucella canis (strain ATCC 23365 / NCTC 10854 / RM-666)</name>
    <dbReference type="NCBI Taxonomy" id="483179"/>
    <lineage>
        <taxon>Bacteria</taxon>
        <taxon>Pseudomonadati</taxon>
        <taxon>Pseudomonadota</taxon>
        <taxon>Alphaproteobacteria</taxon>
        <taxon>Hyphomicrobiales</taxon>
        <taxon>Brucellaceae</taxon>
        <taxon>Brucella/Ochrobactrum group</taxon>
        <taxon>Brucella</taxon>
    </lineage>
</organism>
<accession>A9M9U2</accession>
<evidence type="ECO:0000255" key="1">
    <source>
        <dbReference type="HAMAP-Rule" id="MF_00133"/>
    </source>
</evidence>